<reference key="1">
    <citation type="journal article" date="2005" name="Nature">
        <title>Sequencing of Aspergillus nidulans and comparative analysis with A. fumigatus and A. oryzae.</title>
        <authorList>
            <person name="Galagan J.E."/>
            <person name="Calvo S.E."/>
            <person name="Cuomo C."/>
            <person name="Ma L.-J."/>
            <person name="Wortman J.R."/>
            <person name="Batzoglou S."/>
            <person name="Lee S.-I."/>
            <person name="Bastuerkmen M."/>
            <person name="Spevak C.C."/>
            <person name="Clutterbuck J."/>
            <person name="Kapitonov V."/>
            <person name="Jurka J."/>
            <person name="Scazzocchio C."/>
            <person name="Farman M.L."/>
            <person name="Butler J."/>
            <person name="Purcell S."/>
            <person name="Harris S."/>
            <person name="Braus G.H."/>
            <person name="Draht O."/>
            <person name="Busch S."/>
            <person name="D'Enfert C."/>
            <person name="Bouchier C."/>
            <person name="Goldman G.H."/>
            <person name="Bell-Pedersen D."/>
            <person name="Griffiths-Jones S."/>
            <person name="Doonan J.H."/>
            <person name="Yu J."/>
            <person name="Vienken K."/>
            <person name="Pain A."/>
            <person name="Freitag M."/>
            <person name="Selker E.U."/>
            <person name="Archer D.B."/>
            <person name="Penalva M.A."/>
            <person name="Oakley B.R."/>
            <person name="Momany M."/>
            <person name="Tanaka T."/>
            <person name="Kumagai T."/>
            <person name="Asai K."/>
            <person name="Machida M."/>
            <person name="Nierman W.C."/>
            <person name="Denning D.W."/>
            <person name="Caddick M.X."/>
            <person name="Hynes M."/>
            <person name="Paoletti M."/>
            <person name="Fischer R."/>
            <person name="Miller B.L."/>
            <person name="Dyer P.S."/>
            <person name="Sachs M.S."/>
            <person name="Osmani S.A."/>
            <person name="Birren B.W."/>
        </authorList>
    </citation>
    <scope>NUCLEOTIDE SEQUENCE [LARGE SCALE GENOMIC DNA]</scope>
    <source>
        <strain>FGSC A4 / ATCC 38163 / CBS 112.46 / NRRL 194 / M139</strain>
    </source>
</reference>
<reference key="2">
    <citation type="journal article" date="2009" name="Fungal Genet. Biol.">
        <title>The 2008 update of the Aspergillus nidulans genome annotation: a community effort.</title>
        <authorList>
            <person name="Wortman J.R."/>
            <person name="Gilsenan J.M."/>
            <person name="Joardar V."/>
            <person name="Deegan J."/>
            <person name="Clutterbuck J."/>
            <person name="Andersen M.R."/>
            <person name="Archer D."/>
            <person name="Bencina M."/>
            <person name="Braus G."/>
            <person name="Coutinho P."/>
            <person name="von Dohren H."/>
            <person name="Doonan J."/>
            <person name="Driessen A.J."/>
            <person name="Durek P."/>
            <person name="Espeso E."/>
            <person name="Fekete E."/>
            <person name="Flipphi M."/>
            <person name="Estrada C.G."/>
            <person name="Geysens S."/>
            <person name="Goldman G."/>
            <person name="de Groot P.W."/>
            <person name="Hansen K."/>
            <person name="Harris S.D."/>
            <person name="Heinekamp T."/>
            <person name="Helmstaedt K."/>
            <person name="Henrissat B."/>
            <person name="Hofmann G."/>
            <person name="Homan T."/>
            <person name="Horio T."/>
            <person name="Horiuchi H."/>
            <person name="James S."/>
            <person name="Jones M."/>
            <person name="Karaffa L."/>
            <person name="Karanyi Z."/>
            <person name="Kato M."/>
            <person name="Keller N."/>
            <person name="Kelly D.E."/>
            <person name="Kiel J.A."/>
            <person name="Kim J.M."/>
            <person name="van der Klei I.J."/>
            <person name="Klis F.M."/>
            <person name="Kovalchuk A."/>
            <person name="Krasevec N."/>
            <person name="Kubicek C.P."/>
            <person name="Liu B."/>
            <person name="Maccabe A."/>
            <person name="Meyer V."/>
            <person name="Mirabito P."/>
            <person name="Miskei M."/>
            <person name="Mos M."/>
            <person name="Mullins J."/>
            <person name="Nelson D.R."/>
            <person name="Nielsen J."/>
            <person name="Oakley B.R."/>
            <person name="Osmani S.A."/>
            <person name="Pakula T."/>
            <person name="Paszewski A."/>
            <person name="Paulsen I."/>
            <person name="Pilsyk S."/>
            <person name="Pocsi I."/>
            <person name="Punt P.J."/>
            <person name="Ram A.F."/>
            <person name="Ren Q."/>
            <person name="Robellet X."/>
            <person name="Robson G."/>
            <person name="Seiboth B."/>
            <person name="van Solingen P."/>
            <person name="Specht T."/>
            <person name="Sun J."/>
            <person name="Taheri-Talesh N."/>
            <person name="Takeshita N."/>
            <person name="Ussery D."/>
            <person name="vanKuyk P.A."/>
            <person name="Visser H."/>
            <person name="van de Vondervoort P.J."/>
            <person name="de Vries R.P."/>
            <person name="Walton J."/>
            <person name="Xiang X."/>
            <person name="Xiong Y."/>
            <person name="Zeng A.P."/>
            <person name="Brandt B.W."/>
            <person name="Cornell M.J."/>
            <person name="van den Hondel C.A."/>
            <person name="Visser J."/>
            <person name="Oliver S.G."/>
            <person name="Turner G."/>
        </authorList>
    </citation>
    <scope>GENOME REANNOTATION</scope>
    <source>
        <strain>FGSC A4 / ATCC 38163 / CBS 112.46 / NRRL 194 / M139</strain>
    </source>
</reference>
<reference key="3">
    <citation type="journal article" date="2007" name="Nat. Chem. Biol.">
        <title>Genomics-driven discovery of PKS-NRPS hybrid metabolites from Aspergillus nidulans.</title>
        <authorList>
            <person name="Bergmann S."/>
            <person name="Schuemann J."/>
            <person name="Scherlach K."/>
            <person name="Lange C."/>
            <person name="Brakhage A.A."/>
            <person name="Hertweck C."/>
        </authorList>
    </citation>
    <scope>FUNCTION</scope>
</reference>
<proteinExistence type="inferred from homology"/>
<gene>
    <name evidence="3" type="primary">apdR</name>
    <name type="ORF">AN8414</name>
</gene>
<accession>Q5ATG6</accession>
<accession>C8VEB5</accession>
<feature type="chain" id="PRO_0000438457" description="Aspyridones cluster regulator apdR">
    <location>
        <begin position="1"/>
        <end position="730"/>
    </location>
</feature>
<feature type="DNA-binding region" description="Zn(2)-C6 fungal-type" evidence="1">
    <location>
        <begin position="20"/>
        <end position="46"/>
    </location>
</feature>
<evidence type="ECO:0000255" key="1">
    <source>
        <dbReference type="PROSITE-ProRule" id="PRU00227"/>
    </source>
</evidence>
<evidence type="ECO:0000269" key="2">
    <source>
    </source>
</evidence>
<evidence type="ECO:0000303" key="3">
    <source>
    </source>
</evidence>
<keyword id="KW-0238">DNA-binding</keyword>
<keyword id="KW-0479">Metal-binding</keyword>
<keyword id="KW-0539">Nucleus</keyword>
<keyword id="KW-1185">Reference proteome</keyword>
<keyword id="KW-0804">Transcription</keyword>
<keyword id="KW-0805">Transcription regulation</keyword>
<keyword id="KW-0862">Zinc</keyword>
<name>APDR_EMENI</name>
<comment type="function">
    <text evidence="2">Transcription factor involved in regulation of gene cluster that mediates the biosynthesis of aspyridones (PubMed:17369821).</text>
</comment>
<comment type="subcellular location">
    <subcellularLocation>
        <location evidence="1">Nucleus</location>
    </subcellularLocation>
</comment>
<dbReference type="EMBL" id="BN001305">
    <property type="protein sequence ID" value="CBF80491.1"/>
    <property type="molecule type" value="Genomic_DNA"/>
</dbReference>
<dbReference type="EMBL" id="AACD01000153">
    <property type="protein sequence ID" value="EAA67036.1"/>
    <property type="molecule type" value="Genomic_DNA"/>
</dbReference>
<dbReference type="RefSeq" id="XP_681683.1">
    <property type="nucleotide sequence ID" value="XM_676591.1"/>
</dbReference>
<dbReference type="SMR" id="Q5ATG6"/>
<dbReference type="EnsemblFungi" id="CBF80491">
    <property type="protein sequence ID" value="CBF80491"/>
    <property type="gene ID" value="ANIA_08414"/>
</dbReference>
<dbReference type="KEGG" id="ani:ANIA_08414"/>
<dbReference type="eggNOG" id="ENOG502RZYM">
    <property type="taxonomic scope" value="Eukaryota"/>
</dbReference>
<dbReference type="HOGENOM" id="CLU_007091_4_0_1"/>
<dbReference type="InParanoid" id="Q5ATG6"/>
<dbReference type="OMA" id="SKMPSEW"/>
<dbReference type="OrthoDB" id="4500359at2759"/>
<dbReference type="Proteomes" id="UP000000560">
    <property type="component" value="Chromosome V"/>
</dbReference>
<dbReference type="GO" id="GO:0005634">
    <property type="term" value="C:nucleus"/>
    <property type="evidence" value="ECO:0000318"/>
    <property type="project" value="GO_Central"/>
</dbReference>
<dbReference type="GO" id="GO:0001228">
    <property type="term" value="F:DNA-binding transcription activator activity, RNA polymerase II-specific"/>
    <property type="evidence" value="ECO:0000318"/>
    <property type="project" value="GO_Central"/>
</dbReference>
<dbReference type="GO" id="GO:0000978">
    <property type="term" value="F:RNA polymerase II cis-regulatory region sequence-specific DNA binding"/>
    <property type="evidence" value="ECO:0000318"/>
    <property type="project" value="GO_Central"/>
</dbReference>
<dbReference type="GO" id="GO:0008270">
    <property type="term" value="F:zinc ion binding"/>
    <property type="evidence" value="ECO:0007669"/>
    <property type="project" value="InterPro"/>
</dbReference>
<dbReference type="GO" id="GO:0006357">
    <property type="term" value="P:regulation of transcription by RNA polymerase II"/>
    <property type="evidence" value="ECO:0000318"/>
    <property type="project" value="GO_Central"/>
</dbReference>
<dbReference type="CDD" id="cd12148">
    <property type="entry name" value="fungal_TF_MHR"/>
    <property type="match status" value="1"/>
</dbReference>
<dbReference type="CDD" id="cd00067">
    <property type="entry name" value="GAL4"/>
    <property type="match status" value="1"/>
</dbReference>
<dbReference type="Gene3D" id="4.10.240.10">
    <property type="entry name" value="Zn(2)-C6 fungal-type DNA-binding domain"/>
    <property type="match status" value="1"/>
</dbReference>
<dbReference type="InterPro" id="IPR051430">
    <property type="entry name" value="Fungal_TF_Env_Response"/>
</dbReference>
<dbReference type="InterPro" id="IPR036864">
    <property type="entry name" value="Zn2-C6_fun-type_DNA-bd_sf"/>
</dbReference>
<dbReference type="InterPro" id="IPR001138">
    <property type="entry name" value="Zn2Cys6_DnaBD"/>
</dbReference>
<dbReference type="PANTHER" id="PTHR31944:SF129">
    <property type="entry name" value="ASPYRIDONES CLUSTER REGULATOR APDR-RELATED"/>
    <property type="match status" value="1"/>
</dbReference>
<dbReference type="PANTHER" id="PTHR31944">
    <property type="entry name" value="HEME-RESPONSIVE ZINC FINGER TRANSCRIPTION FACTOR HAP1"/>
    <property type="match status" value="1"/>
</dbReference>
<dbReference type="Pfam" id="PF00172">
    <property type="entry name" value="Zn_clus"/>
    <property type="match status" value="1"/>
</dbReference>
<dbReference type="SMART" id="SM00066">
    <property type="entry name" value="GAL4"/>
    <property type="match status" value="1"/>
</dbReference>
<dbReference type="SUPFAM" id="SSF57701">
    <property type="entry name" value="Zn2/Cys6 DNA-binding domain"/>
    <property type="match status" value="1"/>
</dbReference>
<dbReference type="PROSITE" id="PS00463">
    <property type="entry name" value="ZN2_CY6_FUNGAL_1"/>
    <property type="match status" value="1"/>
</dbReference>
<dbReference type="PROSITE" id="PS50048">
    <property type="entry name" value="ZN2_CY6_FUNGAL_2"/>
    <property type="match status" value="1"/>
</dbReference>
<sequence>MHVDSRGNAPVRRRRPAVACTECRRRKIRCDQATPCRHCEKAALRCIYNHLRPNTSQSKISPPTSASGFISGSQLSVNDSPQLPLSNDTKFHGFGSGSLKSDLSLEYVPSALPTSSSIFVEPNSLSSLSEPLAWEIAPPETGVGILAESDSPLNMQGQTGELRDQHTAPWMEILHCDPDEFWFDSEELRRMWRKTRDLELLLATSKMPSEWLYWSPGPTAPEASSLIPPRATCDVLLELQYWSSPDSMSDVFLCKLLLAMAIGTLFAPASPSAGQLTDMRPRALAWMHYGQQWLFRKIVLDAQLNLDILQTSPTSIGDRHFWLSEDCLVRMAMKLGLHRDPHIHNPAMLGTEVEVRRRLWVTLLELSLQASLDAKLPVPLPSDGGFDTELPSNLSDTDLGSIATLCNPNPRTFFTHSTMQILLAETQRIRIRILNLLYSPATSIPYQEALKLASELRRACNTNLRLLQSFTPQTPGAMMPTEFQTKILDLWTRRFLLALLTPYADEARSDYSLYYTRKARIDASSLLLSYPLSHSTATGPSPIGSYYLQLQISGQGIFRNVLKQATAAICQDLIQELVEDAFPVTDREPHAKLCQIIRDSISIYRTRMELSQPCMQEYVAFVCASAQIGALRSRCDNKHDFFPTAKKALGQCHHILESNHRSNSPEKYRAETMHVLDIDQGMNFWSDLLSTAGASPLSPPSSSSFFLEHGLSHTVPWEAPHSREVVDNER</sequence>
<organism>
    <name type="scientific">Emericella nidulans (strain FGSC A4 / ATCC 38163 / CBS 112.46 / NRRL 194 / M139)</name>
    <name type="common">Aspergillus nidulans</name>
    <dbReference type="NCBI Taxonomy" id="227321"/>
    <lineage>
        <taxon>Eukaryota</taxon>
        <taxon>Fungi</taxon>
        <taxon>Dikarya</taxon>
        <taxon>Ascomycota</taxon>
        <taxon>Pezizomycotina</taxon>
        <taxon>Eurotiomycetes</taxon>
        <taxon>Eurotiomycetidae</taxon>
        <taxon>Eurotiales</taxon>
        <taxon>Aspergillaceae</taxon>
        <taxon>Aspergillus</taxon>
        <taxon>Aspergillus subgen. Nidulantes</taxon>
    </lineage>
</organism>
<protein>
    <recommendedName>
        <fullName evidence="3">Aspyridones cluster regulator apdR</fullName>
    </recommendedName>
    <alternativeName>
        <fullName evidence="3">Aspyridones biosynthesis protein R</fullName>
    </alternativeName>
</protein>